<accession>A3NXU0</accession>
<organism>
    <name type="scientific">Burkholderia pseudomallei (strain 1106a)</name>
    <dbReference type="NCBI Taxonomy" id="357348"/>
    <lineage>
        <taxon>Bacteria</taxon>
        <taxon>Pseudomonadati</taxon>
        <taxon>Pseudomonadota</taxon>
        <taxon>Betaproteobacteria</taxon>
        <taxon>Burkholderiales</taxon>
        <taxon>Burkholderiaceae</taxon>
        <taxon>Burkholderia</taxon>
        <taxon>pseudomallei group</taxon>
    </lineage>
</organism>
<feature type="chain" id="PRO_1000049647" description="Large ribosomal subunit protein bL19">
    <location>
        <begin position="1"/>
        <end position="129"/>
    </location>
</feature>
<reference key="1">
    <citation type="journal article" date="2010" name="Genome Biol. Evol.">
        <title>Continuing evolution of Burkholderia mallei through genome reduction and large-scale rearrangements.</title>
        <authorList>
            <person name="Losada L."/>
            <person name="Ronning C.M."/>
            <person name="DeShazer D."/>
            <person name="Woods D."/>
            <person name="Fedorova N."/>
            <person name="Kim H.S."/>
            <person name="Shabalina S.A."/>
            <person name="Pearson T.R."/>
            <person name="Brinkac L."/>
            <person name="Tan P."/>
            <person name="Nandi T."/>
            <person name="Crabtree J."/>
            <person name="Badger J."/>
            <person name="Beckstrom-Sternberg S."/>
            <person name="Saqib M."/>
            <person name="Schutzer S.E."/>
            <person name="Keim P."/>
            <person name="Nierman W.C."/>
        </authorList>
    </citation>
    <scope>NUCLEOTIDE SEQUENCE [LARGE SCALE GENOMIC DNA]</scope>
    <source>
        <strain>1106a</strain>
    </source>
</reference>
<keyword id="KW-0687">Ribonucleoprotein</keyword>
<keyword id="KW-0689">Ribosomal protein</keyword>
<evidence type="ECO:0000255" key="1">
    <source>
        <dbReference type="HAMAP-Rule" id="MF_00402"/>
    </source>
</evidence>
<evidence type="ECO:0000305" key="2"/>
<sequence length="129" mass="14429">MNLIAKLEQEEIERALAGKTIPEFAPGDTVIVNVNVVEGNRKRVQAYEGVVIAKRNRGLNSSFIVRKISSGEGVERTFQTYSPLLASIVVKRRGDVRRAKLYYLRERSGKSARIKEKLVSKDRAAAAQQ</sequence>
<comment type="function">
    <text evidence="1">This protein is located at the 30S-50S ribosomal subunit interface and may play a role in the structure and function of the aminoacyl-tRNA binding site.</text>
</comment>
<comment type="similarity">
    <text evidence="1">Belongs to the bacterial ribosomal protein bL19 family.</text>
</comment>
<protein>
    <recommendedName>
        <fullName evidence="1">Large ribosomal subunit protein bL19</fullName>
    </recommendedName>
    <alternativeName>
        <fullName evidence="2">50S ribosomal protein L19</fullName>
    </alternativeName>
</protein>
<name>RL19_BURP0</name>
<dbReference type="EMBL" id="CP000572">
    <property type="protein sequence ID" value="ABN89871.1"/>
    <property type="molecule type" value="Genomic_DNA"/>
</dbReference>
<dbReference type="RefSeq" id="WP_004189360.1">
    <property type="nucleotide sequence ID" value="NC_009076.1"/>
</dbReference>
<dbReference type="SMR" id="A3NXU0"/>
<dbReference type="GeneID" id="93061076"/>
<dbReference type="KEGG" id="bpl:BURPS1106A_2916"/>
<dbReference type="HOGENOM" id="CLU_103507_1_0_4"/>
<dbReference type="Proteomes" id="UP000006738">
    <property type="component" value="Chromosome I"/>
</dbReference>
<dbReference type="GO" id="GO:0022625">
    <property type="term" value="C:cytosolic large ribosomal subunit"/>
    <property type="evidence" value="ECO:0007669"/>
    <property type="project" value="TreeGrafter"/>
</dbReference>
<dbReference type="GO" id="GO:0003735">
    <property type="term" value="F:structural constituent of ribosome"/>
    <property type="evidence" value="ECO:0007669"/>
    <property type="project" value="InterPro"/>
</dbReference>
<dbReference type="GO" id="GO:0006412">
    <property type="term" value="P:translation"/>
    <property type="evidence" value="ECO:0007669"/>
    <property type="project" value="UniProtKB-UniRule"/>
</dbReference>
<dbReference type="FunFam" id="2.30.30.790:FF:000001">
    <property type="entry name" value="50S ribosomal protein L19"/>
    <property type="match status" value="1"/>
</dbReference>
<dbReference type="Gene3D" id="2.30.30.790">
    <property type="match status" value="1"/>
</dbReference>
<dbReference type="HAMAP" id="MF_00402">
    <property type="entry name" value="Ribosomal_bL19"/>
    <property type="match status" value="1"/>
</dbReference>
<dbReference type="InterPro" id="IPR001857">
    <property type="entry name" value="Ribosomal_bL19"/>
</dbReference>
<dbReference type="InterPro" id="IPR018257">
    <property type="entry name" value="Ribosomal_bL19_CS"/>
</dbReference>
<dbReference type="InterPro" id="IPR038657">
    <property type="entry name" value="Ribosomal_bL19_sf"/>
</dbReference>
<dbReference type="InterPro" id="IPR008991">
    <property type="entry name" value="Translation_prot_SH3-like_sf"/>
</dbReference>
<dbReference type="NCBIfam" id="TIGR01024">
    <property type="entry name" value="rplS_bact"/>
    <property type="match status" value="1"/>
</dbReference>
<dbReference type="PANTHER" id="PTHR15680:SF9">
    <property type="entry name" value="LARGE RIBOSOMAL SUBUNIT PROTEIN BL19M"/>
    <property type="match status" value="1"/>
</dbReference>
<dbReference type="PANTHER" id="PTHR15680">
    <property type="entry name" value="RIBOSOMAL PROTEIN L19"/>
    <property type="match status" value="1"/>
</dbReference>
<dbReference type="Pfam" id="PF01245">
    <property type="entry name" value="Ribosomal_L19"/>
    <property type="match status" value="1"/>
</dbReference>
<dbReference type="PIRSF" id="PIRSF002191">
    <property type="entry name" value="Ribosomal_L19"/>
    <property type="match status" value="1"/>
</dbReference>
<dbReference type="PRINTS" id="PR00061">
    <property type="entry name" value="RIBOSOMALL19"/>
</dbReference>
<dbReference type="SUPFAM" id="SSF50104">
    <property type="entry name" value="Translation proteins SH3-like domain"/>
    <property type="match status" value="1"/>
</dbReference>
<dbReference type="PROSITE" id="PS01015">
    <property type="entry name" value="RIBOSOMAL_L19"/>
    <property type="match status" value="1"/>
</dbReference>
<proteinExistence type="inferred from homology"/>
<gene>
    <name evidence="1" type="primary">rplS</name>
    <name type="ordered locus">BURPS1106A_2916</name>
</gene>